<evidence type="ECO:0000250" key="1">
    <source>
        <dbReference type="UniProtKB" id="Q9BZX2"/>
    </source>
</evidence>
<evidence type="ECO:0000250" key="2">
    <source>
        <dbReference type="UniProtKB" id="Q9HA47"/>
    </source>
</evidence>
<evidence type="ECO:0000256" key="3">
    <source>
        <dbReference type="SAM" id="MobiDB-lite"/>
    </source>
</evidence>
<evidence type="ECO:0000305" key="4"/>
<keyword id="KW-0067">ATP-binding</keyword>
<keyword id="KW-0418">Kinase</keyword>
<keyword id="KW-0547">Nucleotide-binding</keyword>
<keyword id="KW-0597">Phosphoprotein</keyword>
<keyword id="KW-1185">Reference proteome</keyword>
<keyword id="KW-0808">Transferase</keyword>
<accession>Q0P5A4</accession>
<gene>
    <name type="primary">UCK1</name>
</gene>
<feature type="chain" id="PRO_0000346099" description="Uridine-cytidine kinase 1">
    <location>
        <begin position="1"/>
        <end position="277"/>
    </location>
</feature>
<feature type="region of interest" description="Disordered" evidence="3">
    <location>
        <begin position="1"/>
        <end position="29"/>
    </location>
</feature>
<feature type="region of interest" description="Disordered" evidence="3">
    <location>
        <begin position="246"/>
        <end position="277"/>
    </location>
</feature>
<feature type="compositionally biased region" description="Gly residues" evidence="3">
    <location>
        <begin position="1"/>
        <end position="10"/>
    </location>
</feature>
<feature type="compositionally biased region" description="Basic and acidic residues" evidence="3">
    <location>
        <begin position="268"/>
        <end position="277"/>
    </location>
</feature>
<feature type="binding site" evidence="2">
    <location>
        <begin position="30"/>
        <end position="38"/>
    </location>
    <ligand>
        <name>ATP</name>
        <dbReference type="ChEBI" id="CHEBI:30616"/>
    </ligand>
</feature>
<feature type="binding site" evidence="1">
    <location>
        <position position="87"/>
    </location>
    <ligand>
        <name>substrate</name>
    </ligand>
</feature>
<feature type="binding site" evidence="1">
    <location>
        <position position="115"/>
    </location>
    <ligand>
        <name>substrate</name>
    </ligand>
</feature>
<feature type="binding site" evidence="1">
    <location>
        <position position="120"/>
    </location>
    <ligand>
        <name>substrate</name>
    </ligand>
</feature>
<feature type="binding site" evidence="1">
    <location>
        <position position="169"/>
    </location>
    <ligand>
        <name>substrate</name>
    </ligand>
</feature>
<feature type="binding site" evidence="1">
    <location>
        <position position="178"/>
    </location>
    <ligand>
        <name>substrate</name>
    </ligand>
</feature>
<feature type="binding site" evidence="1">
    <location>
        <position position="186"/>
    </location>
    <ligand>
        <name>substrate</name>
    </ligand>
</feature>
<feature type="binding site" evidence="2">
    <location>
        <position position="215"/>
    </location>
    <ligand>
        <name>ATP</name>
        <dbReference type="ChEBI" id="CHEBI:30616"/>
    </ligand>
</feature>
<feature type="modified residue" description="Phosphothreonine" evidence="2">
    <location>
        <position position="251"/>
    </location>
</feature>
<dbReference type="EC" id="2.7.1.48" evidence="2"/>
<dbReference type="EMBL" id="BC120304">
    <property type="protein sequence ID" value="AAI20305.1"/>
    <property type="molecule type" value="mRNA"/>
</dbReference>
<dbReference type="RefSeq" id="NP_001069260.1">
    <property type="nucleotide sequence ID" value="NM_001075792.1"/>
</dbReference>
<dbReference type="SMR" id="Q0P5A4"/>
<dbReference type="BioGRID" id="176315">
    <property type="interactions" value="1"/>
</dbReference>
<dbReference type="FunCoup" id="Q0P5A4">
    <property type="interactions" value="1154"/>
</dbReference>
<dbReference type="STRING" id="9913.ENSBTAP00000014316"/>
<dbReference type="PaxDb" id="9913-ENSBTAP00000014316"/>
<dbReference type="GeneID" id="519697"/>
<dbReference type="KEGG" id="bta:519697"/>
<dbReference type="CTD" id="83549"/>
<dbReference type="eggNOG" id="KOG4203">
    <property type="taxonomic scope" value="Eukaryota"/>
</dbReference>
<dbReference type="HOGENOM" id="CLU_021278_1_1_1"/>
<dbReference type="InParanoid" id="Q0P5A4"/>
<dbReference type="OrthoDB" id="10257085at2759"/>
<dbReference type="TreeFam" id="TF316686"/>
<dbReference type="UniPathway" id="UPA00574">
    <property type="reaction ID" value="UER00637"/>
</dbReference>
<dbReference type="UniPathway" id="UPA00579">
    <property type="reaction ID" value="UER00640"/>
</dbReference>
<dbReference type="Proteomes" id="UP000009136">
    <property type="component" value="Unplaced"/>
</dbReference>
<dbReference type="GO" id="GO:0005737">
    <property type="term" value="C:cytoplasm"/>
    <property type="evidence" value="ECO:0000318"/>
    <property type="project" value="GO_Central"/>
</dbReference>
<dbReference type="GO" id="GO:0005524">
    <property type="term" value="F:ATP binding"/>
    <property type="evidence" value="ECO:0007669"/>
    <property type="project" value="UniProtKB-KW"/>
</dbReference>
<dbReference type="GO" id="GO:0043771">
    <property type="term" value="F:cytidine kinase activity"/>
    <property type="evidence" value="ECO:0000250"/>
    <property type="project" value="UniProtKB"/>
</dbReference>
<dbReference type="GO" id="GO:0004849">
    <property type="term" value="F:uridine kinase activity"/>
    <property type="evidence" value="ECO:0000250"/>
    <property type="project" value="UniProtKB"/>
</dbReference>
<dbReference type="GO" id="GO:0044211">
    <property type="term" value="P:CTP salvage"/>
    <property type="evidence" value="ECO:0000250"/>
    <property type="project" value="UniProtKB"/>
</dbReference>
<dbReference type="GO" id="GO:0044206">
    <property type="term" value="P:UMP salvage"/>
    <property type="evidence" value="ECO:0000250"/>
    <property type="project" value="UniProtKB"/>
</dbReference>
<dbReference type="CDD" id="cd02023">
    <property type="entry name" value="UMPK"/>
    <property type="match status" value="1"/>
</dbReference>
<dbReference type="FunFam" id="3.40.50.300:FF:000297">
    <property type="entry name" value="Uridine-cytidine kinase 2"/>
    <property type="match status" value="1"/>
</dbReference>
<dbReference type="Gene3D" id="3.40.50.300">
    <property type="entry name" value="P-loop containing nucleotide triphosphate hydrolases"/>
    <property type="match status" value="1"/>
</dbReference>
<dbReference type="InterPro" id="IPR027417">
    <property type="entry name" value="P-loop_NTPase"/>
</dbReference>
<dbReference type="InterPro" id="IPR006083">
    <property type="entry name" value="PRK/URK"/>
</dbReference>
<dbReference type="InterPro" id="IPR000764">
    <property type="entry name" value="Uridine_kinase-like"/>
</dbReference>
<dbReference type="NCBIfam" id="NF004018">
    <property type="entry name" value="PRK05480.1"/>
    <property type="match status" value="1"/>
</dbReference>
<dbReference type="NCBIfam" id="TIGR00235">
    <property type="entry name" value="udk"/>
    <property type="match status" value="1"/>
</dbReference>
<dbReference type="PANTHER" id="PTHR10285">
    <property type="entry name" value="URIDINE KINASE"/>
    <property type="match status" value="1"/>
</dbReference>
<dbReference type="Pfam" id="PF00485">
    <property type="entry name" value="PRK"/>
    <property type="match status" value="1"/>
</dbReference>
<dbReference type="PRINTS" id="PR00988">
    <property type="entry name" value="URIDINKINASE"/>
</dbReference>
<dbReference type="SUPFAM" id="SSF52540">
    <property type="entry name" value="P-loop containing nucleoside triphosphate hydrolases"/>
    <property type="match status" value="1"/>
</dbReference>
<comment type="function">
    <text evidence="2">Phosphorylates uridine and cytidine to uridine monophosphate and cytidine monophosphate. Does not phosphorylate deoxyribonucleosides or purine ribonucleosides. Can use ATP or GTP as a phosphate donor.</text>
</comment>
<comment type="catalytic activity">
    <reaction evidence="2">
        <text>uridine + ATP = UMP + ADP + H(+)</text>
        <dbReference type="Rhea" id="RHEA:16825"/>
        <dbReference type="ChEBI" id="CHEBI:15378"/>
        <dbReference type="ChEBI" id="CHEBI:16704"/>
        <dbReference type="ChEBI" id="CHEBI:30616"/>
        <dbReference type="ChEBI" id="CHEBI:57865"/>
        <dbReference type="ChEBI" id="CHEBI:456216"/>
        <dbReference type="EC" id="2.7.1.48"/>
    </reaction>
</comment>
<comment type="catalytic activity">
    <reaction evidence="2">
        <text>cytidine + ATP = CMP + ADP + H(+)</text>
        <dbReference type="Rhea" id="RHEA:24674"/>
        <dbReference type="ChEBI" id="CHEBI:15378"/>
        <dbReference type="ChEBI" id="CHEBI:17562"/>
        <dbReference type="ChEBI" id="CHEBI:30616"/>
        <dbReference type="ChEBI" id="CHEBI:60377"/>
        <dbReference type="ChEBI" id="CHEBI:456216"/>
        <dbReference type="EC" id="2.7.1.48"/>
    </reaction>
</comment>
<comment type="pathway">
    <text evidence="2">Pyrimidine metabolism; CTP biosynthesis via salvage pathway; CTP from cytidine: step 1/3.</text>
</comment>
<comment type="pathway">
    <text evidence="2">Pyrimidine metabolism; UMP biosynthesis via salvage pathway; UMP from uridine: step 1/1.</text>
</comment>
<comment type="similarity">
    <text evidence="4">Belongs to the uridine kinase family.</text>
</comment>
<name>UCK1_BOVIN</name>
<protein>
    <recommendedName>
        <fullName>Uridine-cytidine kinase 1</fullName>
        <shortName>UCK 1</shortName>
        <ecNumber evidence="2">2.7.1.48</ecNumber>
    </recommendedName>
    <alternativeName>
        <fullName>Cytidine monophosphokinase 1</fullName>
    </alternativeName>
    <alternativeName>
        <fullName>Uridine monophosphokinase 1</fullName>
    </alternativeName>
</protein>
<organism>
    <name type="scientific">Bos taurus</name>
    <name type="common">Bovine</name>
    <dbReference type="NCBI Taxonomy" id="9913"/>
    <lineage>
        <taxon>Eukaryota</taxon>
        <taxon>Metazoa</taxon>
        <taxon>Chordata</taxon>
        <taxon>Craniata</taxon>
        <taxon>Vertebrata</taxon>
        <taxon>Euteleostomi</taxon>
        <taxon>Mammalia</taxon>
        <taxon>Eutheria</taxon>
        <taxon>Laurasiatheria</taxon>
        <taxon>Artiodactyla</taxon>
        <taxon>Ruminantia</taxon>
        <taxon>Pecora</taxon>
        <taxon>Bovidae</taxon>
        <taxon>Bovinae</taxon>
        <taxon>Bos</taxon>
    </lineage>
</organism>
<sequence>MASAGGGDCEGAGPEADRPHQRPFLIGVSGGTASGKSTVCEKIMELLGQNEVDHRQRKLVILSQDRFYKVLTAEQKAKALKGQYNFDHPDAFDNDLMHRTLKNIVEGKTVEVPTYDFVTHSRLAETTVVYPADVVLFEGILVFYSQEIRDMFHLRLFVDTDSDVRLSRRVLRDVQRGRDLEQILTQYTTFVKPAFEEFCLPTKKYADVIIPRGVDNMVAINLIVQHIQDILNGDICKWHRAGANGRSHKRTFPEPGEHPAVLASGKRSHLESSSRPH</sequence>
<proteinExistence type="evidence at transcript level"/>
<reference key="1">
    <citation type="submission" date="2006-08" db="EMBL/GenBank/DDBJ databases">
        <authorList>
            <consortium name="NIH - Mammalian Gene Collection (MGC) project"/>
        </authorList>
    </citation>
    <scope>NUCLEOTIDE SEQUENCE [LARGE SCALE MRNA]</scope>
    <source>
        <strain>Hereford</strain>
        <tissue>Ascending colon</tissue>
    </source>
</reference>